<feature type="chain" id="PRO_1000019548" description="ATP-dependent dethiobiotin synthetase BioD">
    <location>
        <begin position="1"/>
        <end position="233"/>
    </location>
</feature>
<feature type="active site" evidence="1">
    <location>
        <position position="37"/>
    </location>
</feature>
<feature type="binding site" evidence="1">
    <location>
        <begin position="12"/>
        <end position="17"/>
    </location>
    <ligand>
        <name>ATP</name>
        <dbReference type="ChEBI" id="CHEBI:30616"/>
    </ligand>
</feature>
<feature type="binding site" evidence="1">
    <location>
        <position position="16"/>
    </location>
    <ligand>
        <name>Mg(2+)</name>
        <dbReference type="ChEBI" id="CHEBI:18420"/>
    </ligand>
</feature>
<feature type="binding site" evidence="1">
    <location>
        <position position="41"/>
    </location>
    <ligand>
        <name>substrate</name>
    </ligand>
</feature>
<feature type="binding site" evidence="1">
    <location>
        <position position="51"/>
    </location>
    <ligand>
        <name>ATP</name>
        <dbReference type="ChEBI" id="CHEBI:30616"/>
    </ligand>
</feature>
<feature type="binding site" evidence="1">
    <location>
        <position position="51"/>
    </location>
    <ligand>
        <name>Mg(2+)</name>
        <dbReference type="ChEBI" id="CHEBI:18420"/>
    </ligand>
</feature>
<feature type="binding site" evidence="1">
    <location>
        <begin position="112"/>
        <end position="115"/>
    </location>
    <ligand>
        <name>ATP</name>
        <dbReference type="ChEBI" id="CHEBI:30616"/>
    </ligand>
</feature>
<feature type="binding site" evidence="1">
    <location>
        <position position="112"/>
    </location>
    <ligand>
        <name>Mg(2+)</name>
        <dbReference type="ChEBI" id="CHEBI:18420"/>
    </ligand>
</feature>
<feature type="binding site" evidence="1">
    <location>
        <begin position="202"/>
        <end position="204"/>
    </location>
    <ligand>
        <name>ATP</name>
        <dbReference type="ChEBI" id="CHEBI:30616"/>
    </ligand>
</feature>
<sequence>MRSFFVTGTDTGVGKTIVSCGLAAAFRQKQADIGVFKPFLSGVPRTHPESDTSLLKDMSQTALSHEEITPFEWKEPLAPYTAAMLEGKSVSMADVMAHWSKIKNRHECFIVEGAGGISVPLGENYLVSDLIKAMELPAVIVTRPDLGTINHTYLTVEYAKNMGIEVLGIIINGVRSRPGLDEKTNPSMIETLCKVPILGITPKLDHVSSENIQHMIEKHIDVSSFMNLTQMGR</sequence>
<name>BIOD_BACVZ</name>
<accession>A7Z5B3</accession>
<keyword id="KW-0067">ATP-binding</keyword>
<keyword id="KW-0093">Biotin biosynthesis</keyword>
<keyword id="KW-0963">Cytoplasm</keyword>
<keyword id="KW-0436">Ligase</keyword>
<keyword id="KW-0460">Magnesium</keyword>
<keyword id="KW-0479">Metal-binding</keyword>
<keyword id="KW-0547">Nucleotide-binding</keyword>
<organism>
    <name type="scientific">Bacillus velezensis (strain DSM 23117 / BGSC 10A6 / LMG 26770 / FZB42)</name>
    <name type="common">Bacillus amyloliquefaciens subsp. plantarum</name>
    <dbReference type="NCBI Taxonomy" id="326423"/>
    <lineage>
        <taxon>Bacteria</taxon>
        <taxon>Bacillati</taxon>
        <taxon>Bacillota</taxon>
        <taxon>Bacilli</taxon>
        <taxon>Bacillales</taxon>
        <taxon>Bacillaceae</taxon>
        <taxon>Bacillus</taxon>
        <taxon>Bacillus amyloliquefaciens group</taxon>
    </lineage>
</organism>
<protein>
    <recommendedName>
        <fullName evidence="1">ATP-dependent dethiobiotin synthetase BioD</fullName>
        <ecNumber evidence="1">6.3.3.3</ecNumber>
    </recommendedName>
    <alternativeName>
        <fullName evidence="1">DTB synthetase</fullName>
        <shortName evidence="1">DTBS</shortName>
    </alternativeName>
    <alternativeName>
        <fullName evidence="1">Dethiobiotin synthase</fullName>
    </alternativeName>
</protein>
<reference key="1">
    <citation type="journal article" date="2007" name="Nat. Biotechnol.">
        <title>Comparative analysis of the complete genome sequence of the plant growth-promoting bacterium Bacillus amyloliquefaciens FZB42.</title>
        <authorList>
            <person name="Chen X.H."/>
            <person name="Koumoutsi A."/>
            <person name="Scholz R."/>
            <person name="Eisenreich A."/>
            <person name="Schneider K."/>
            <person name="Heinemeyer I."/>
            <person name="Morgenstern B."/>
            <person name="Voss B."/>
            <person name="Hess W.R."/>
            <person name="Reva O."/>
            <person name="Junge H."/>
            <person name="Voigt B."/>
            <person name="Jungblut P.R."/>
            <person name="Vater J."/>
            <person name="Suessmuth R."/>
            <person name="Liesegang H."/>
            <person name="Strittmatter A."/>
            <person name="Gottschalk G."/>
            <person name="Borriss R."/>
        </authorList>
    </citation>
    <scope>NUCLEOTIDE SEQUENCE [LARGE SCALE GENOMIC DNA]</scope>
    <source>
        <strain>DSM 23117 / BGSC 10A6 / LMG 26770 / FZB42</strain>
    </source>
</reference>
<dbReference type="EC" id="6.3.3.3" evidence="1"/>
<dbReference type="EMBL" id="CP000560">
    <property type="protein sequence ID" value="ABS74189.1"/>
    <property type="molecule type" value="Genomic_DNA"/>
</dbReference>
<dbReference type="RefSeq" id="WP_012117685.1">
    <property type="nucleotide sequence ID" value="NC_009725.2"/>
</dbReference>
<dbReference type="SMR" id="A7Z5B3"/>
<dbReference type="GeneID" id="93080955"/>
<dbReference type="KEGG" id="bay:RBAM_018260"/>
<dbReference type="HOGENOM" id="CLU_072551_3_1_9"/>
<dbReference type="UniPathway" id="UPA00078">
    <property type="reaction ID" value="UER00161"/>
</dbReference>
<dbReference type="Proteomes" id="UP000001120">
    <property type="component" value="Chromosome"/>
</dbReference>
<dbReference type="GO" id="GO:0005829">
    <property type="term" value="C:cytosol"/>
    <property type="evidence" value="ECO:0007669"/>
    <property type="project" value="TreeGrafter"/>
</dbReference>
<dbReference type="GO" id="GO:0005524">
    <property type="term" value="F:ATP binding"/>
    <property type="evidence" value="ECO:0007669"/>
    <property type="project" value="UniProtKB-UniRule"/>
</dbReference>
<dbReference type="GO" id="GO:0004141">
    <property type="term" value="F:dethiobiotin synthase activity"/>
    <property type="evidence" value="ECO:0007669"/>
    <property type="project" value="UniProtKB-UniRule"/>
</dbReference>
<dbReference type="GO" id="GO:0000287">
    <property type="term" value="F:magnesium ion binding"/>
    <property type="evidence" value="ECO:0007669"/>
    <property type="project" value="UniProtKB-UniRule"/>
</dbReference>
<dbReference type="GO" id="GO:0009102">
    <property type="term" value="P:biotin biosynthetic process"/>
    <property type="evidence" value="ECO:0007669"/>
    <property type="project" value="UniProtKB-UniRule"/>
</dbReference>
<dbReference type="CDD" id="cd03109">
    <property type="entry name" value="DTBS"/>
    <property type="match status" value="1"/>
</dbReference>
<dbReference type="FunFam" id="3.40.50.300:FF:000292">
    <property type="entry name" value="ATP-dependent dethiobiotin synthetase BioD"/>
    <property type="match status" value="1"/>
</dbReference>
<dbReference type="Gene3D" id="3.40.50.300">
    <property type="entry name" value="P-loop containing nucleotide triphosphate hydrolases"/>
    <property type="match status" value="1"/>
</dbReference>
<dbReference type="HAMAP" id="MF_00336">
    <property type="entry name" value="BioD"/>
    <property type="match status" value="1"/>
</dbReference>
<dbReference type="InterPro" id="IPR004472">
    <property type="entry name" value="DTB_synth_BioD"/>
</dbReference>
<dbReference type="InterPro" id="IPR027417">
    <property type="entry name" value="P-loop_NTPase"/>
</dbReference>
<dbReference type="NCBIfam" id="TIGR00347">
    <property type="entry name" value="bioD"/>
    <property type="match status" value="1"/>
</dbReference>
<dbReference type="PANTHER" id="PTHR43210:SF2">
    <property type="entry name" value="ATP-DEPENDENT DETHIOBIOTIN SYNTHETASE BIOD 2"/>
    <property type="match status" value="1"/>
</dbReference>
<dbReference type="PANTHER" id="PTHR43210">
    <property type="entry name" value="DETHIOBIOTIN SYNTHETASE"/>
    <property type="match status" value="1"/>
</dbReference>
<dbReference type="Pfam" id="PF13500">
    <property type="entry name" value="AAA_26"/>
    <property type="match status" value="1"/>
</dbReference>
<dbReference type="PIRSF" id="PIRSF006755">
    <property type="entry name" value="DTB_synth"/>
    <property type="match status" value="1"/>
</dbReference>
<dbReference type="SUPFAM" id="SSF52540">
    <property type="entry name" value="P-loop containing nucleoside triphosphate hydrolases"/>
    <property type="match status" value="1"/>
</dbReference>
<comment type="function">
    <text evidence="1">Catalyzes a mechanistically unusual reaction, the ATP-dependent insertion of CO2 between the N7 and N8 nitrogen atoms of 7,8-diaminopelargonic acid (DAPA, also called 7,8-diammoniononanoate) to form a ureido ring.</text>
</comment>
<comment type="catalytic activity">
    <reaction evidence="1">
        <text>(7R,8S)-7,8-diammoniononanoate + CO2 + ATP = (4R,5S)-dethiobiotin + ADP + phosphate + 3 H(+)</text>
        <dbReference type="Rhea" id="RHEA:15805"/>
        <dbReference type="ChEBI" id="CHEBI:15378"/>
        <dbReference type="ChEBI" id="CHEBI:16526"/>
        <dbReference type="ChEBI" id="CHEBI:30616"/>
        <dbReference type="ChEBI" id="CHEBI:43474"/>
        <dbReference type="ChEBI" id="CHEBI:149469"/>
        <dbReference type="ChEBI" id="CHEBI:149473"/>
        <dbReference type="ChEBI" id="CHEBI:456216"/>
        <dbReference type="EC" id="6.3.3.3"/>
    </reaction>
</comment>
<comment type="cofactor">
    <cofactor evidence="1">
        <name>Mg(2+)</name>
        <dbReference type="ChEBI" id="CHEBI:18420"/>
    </cofactor>
</comment>
<comment type="pathway">
    <text evidence="1">Cofactor biosynthesis; biotin biosynthesis; biotin from 7,8-diaminononanoate: step 1/2.</text>
</comment>
<comment type="subunit">
    <text evidence="1">Homodimer.</text>
</comment>
<comment type="subcellular location">
    <subcellularLocation>
        <location evidence="1">Cytoplasm</location>
    </subcellularLocation>
</comment>
<comment type="similarity">
    <text evidence="1">Belongs to the dethiobiotin synthetase family.</text>
</comment>
<gene>
    <name evidence="1" type="primary">bioD</name>
    <name type="ordered locus">RBAM_018260</name>
</gene>
<proteinExistence type="inferred from homology"/>
<evidence type="ECO:0000255" key="1">
    <source>
        <dbReference type="HAMAP-Rule" id="MF_00336"/>
    </source>
</evidence>